<proteinExistence type="evidence at protein level"/>
<organism evidence="4">
    <name type="scientific">Sylvirana spinulosa</name>
    <name type="common">Fine-spined frog</name>
    <name type="synonym">Hylarana spinulosa</name>
    <dbReference type="NCBI Taxonomy" id="369515"/>
    <lineage>
        <taxon>Eukaryota</taxon>
        <taxon>Metazoa</taxon>
        <taxon>Chordata</taxon>
        <taxon>Craniata</taxon>
        <taxon>Vertebrata</taxon>
        <taxon>Euteleostomi</taxon>
        <taxon>Amphibia</taxon>
        <taxon>Batrachia</taxon>
        <taxon>Anura</taxon>
        <taxon>Neobatrachia</taxon>
        <taxon>Ranoidea</taxon>
        <taxon>Ranidae</taxon>
        <taxon>Sylvirana</taxon>
    </lineage>
</organism>
<keyword id="KW-0878">Amphibian defense peptide</keyword>
<keyword id="KW-0044">Antibiotic</keyword>
<keyword id="KW-0929">Antimicrobial</keyword>
<keyword id="KW-0165">Cleavage on pair of basic residues</keyword>
<keyword id="KW-0204">Cytolysis</keyword>
<keyword id="KW-0903">Direct protein sequencing</keyword>
<keyword id="KW-1015">Disulfide bond</keyword>
<keyword id="KW-0295">Fungicide</keyword>
<keyword id="KW-0354">Hemolysis</keyword>
<keyword id="KW-0964">Secreted</keyword>
<keyword id="KW-0732">Signal</keyword>
<name>B2S22_SYLSP</name>
<accession>E7EKH4</accession>
<comment type="function">
    <text evidence="3">Antimicrobial peptide. Active against some Gram-negative and a variety of Gram-positive bacterial strains. Active against fungus C.glabrata 090902 but not against C.albicans ATCC 10231. Shows hemolytic activity against human erythrocytes.</text>
</comment>
<comment type="subcellular location">
    <subcellularLocation>
        <location evidence="5">Secreted</location>
    </subcellularLocation>
</comment>
<comment type="tissue specificity">
    <text evidence="5">Expressed by the skin glands.</text>
</comment>
<comment type="similarity">
    <text evidence="2">Belongs to the frog skin active peptide (FSAP) family. Brevinin subfamily.</text>
</comment>
<dbReference type="EMBL" id="HQ735151">
    <property type="protein sequence ID" value="ADV36174.1"/>
    <property type="molecule type" value="mRNA"/>
</dbReference>
<dbReference type="GO" id="GO:0005576">
    <property type="term" value="C:extracellular region"/>
    <property type="evidence" value="ECO:0007669"/>
    <property type="project" value="UniProtKB-SubCell"/>
</dbReference>
<dbReference type="GO" id="GO:0050832">
    <property type="term" value="P:defense response to fungus"/>
    <property type="evidence" value="ECO:0000314"/>
    <property type="project" value="UniProtKB"/>
</dbReference>
<dbReference type="GO" id="GO:0050829">
    <property type="term" value="P:defense response to Gram-negative bacterium"/>
    <property type="evidence" value="ECO:0000314"/>
    <property type="project" value="UniProtKB"/>
</dbReference>
<dbReference type="GO" id="GO:0050830">
    <property type="term" value="P:defense response to Gram-positive bacterium"/>
    <property type="evidence" value="ECO:0000314"/>
    <property type="project" value="UniProtKB"/>
</dbReference>
<dbReference type="GO" id="GO:0044179">
    <property type="term" value="P:hemolysis in another organism"/>
    <property type="evidence" value="ECO:0000314"/>
    <property type="project" value="UniProtKB"/>
</dbReference>
<dbReference type="InterPro" id="IPR012521">
    <property type="entry name" value="Antimicrobial_frog_2"/>
</dbReference>
<dbReference type="InterPro" id="IPR004275">
    <property type="entry name" value="Frog_antimicrobial_propeptide"/>
</dbReference>
<dbReference type="Pfam" id="PF08023">
    <property type="entry name" value="Antimicrobial_2"/>
    <property type="match status" value="1"/>
</dbReference>
<dbReference type="Pfam" id="PF03032">
    <property type="entry name" value="FSAP_sig_propep"/>
    <property type="match status" value="1"/>
</dbReference>
<feature type="signal peptide" evidence="2">
    <location>
        <begin position="1"/>
        <end position="22"/>
    </location>
</feature>
<feature type="propeptide" id="PRO_0000439776" description="Removed in mature form" evidence="5">
    <location>
        <begin position="23"/>
        <end position="40"/>
    </location>
</feature>
<feature type="peptide" id="PRO_0000439777" description="Brevinin-2SN2" evidence="3">
    <location>
        <begin position="43"/>
        <end position="75"/>
    </location>
</feature>
<feature type="disulfide bond" evidence="1">
    <location>
        <begin position="69"/>
        <end position="75"/>
    </location>
</feature>
<sequence>MFTMKKSLLFLFFLGTISLSFCEEERGADEDDGGEMTEEEKRGVLDTLKNVAIGVAKGAGTGVLKALLCQLDKSC</sequence>
<protein>
    <recommendedName>
        <fullName evidence="4">Brevinin-2SN2</fullName>
    </recommendedName>
</protein>
<evidence type="ECO:0000250" key="1">
    <source>
        <dbReference type="UniProtKB" id="P80398"/>
    </source>
</evidence>
<evidence type="ECO:0000255" key="2"/>
<evidence type="ECO:0000269" key="3">
    <source>
    </source>
</evidence>
<evidence type="ECO:0000303" key="4">
    <source>
    </source>
</evidence>
<evidence type="ECO:0000305" key="5">
    <source>
    </source>
</evidence>
<evidence type="ECO:0000312" key="6">
    <source>
        <dbReference type="EMBL" id="ADV36174.1"/>
    </source>
</evidence>
<reference evidence="6" key="1">
    <citation type="journal article" date="2013" name="Biochimie">
        <title>Identification of multiple antimicrobial peptides from the skin of fine-spined frog, Hylarana spinulosa (Ranidae).</title>
        <authorList>
            <person name="Yang X."/>
            <person name="Hu Y."/>
            <person name="Xu S."/>
            <person name="Hu Y."/>
            <person name="Meng H."/>
            <person name="Guo C."/>
            <person name="Liu Y."/>
            <person name="Liu J."/>
            <person name="Yu Z."/>
            <person name="Wang H."/>
        </authorList>
    </citation>
    <scope>NUCLEOTIDE SEQUENCE [MRNA]</scope>
    <scope>PROTEIN SEQUENCE OF 43-75</scope>
    <scope>FUNCTION</scope>
    <scope>SYNTHESIS</scope>
    <scope>IDENTIFICATION BY MASS SPECTROMETRY</scope>
    <source>
        <tissue evidence="4">Skin</tissue>
    </source>
</reference>